<dbReference type="EMBL" id="CP001233">
    <property type="protein sequence ID" value="ACP05031.1"/>
    <property type="molecule type" value="Genomic_DNA"/>
</dbReference>
<dbReference type="RefSeq" id="WP_001196554.1">
    <property type="nucleotide sequence ID" value="NC_012578.1"/>
</dbReference>
<dbReference type="SMR" id="C3LT05"/>
<dbReference type="GeneID" id="69720498"/>
<dbReference type="KEGG" id="vcm:VCM66_0710"/>
<dbReference type="HOGENOM" id="CLU_005965_2_1_6"/>
<dbReference type="Proteomes" id="UP000001217">
    <property type="component" value="Chromosome I"/>
</dbReference>
<dbReference type="GO" id="GO:0005524">
    <property type="term" value="F:ATP binding"/>
    <property type="evidence" value="ECO:0007669"/>
    <property type="project" value="UniProtKB-KW"/>
</dbReference>
<dbReference type="GO" id="GO:0016887">
    <property type="term" value="F:ATP hydrolysis activity"/>
    <property type="evidence" value="ECO:0007669"/>
    <property type="project" value="UniProtKB-UniRule"/>
</dbReference>
<dbReference type="GO" id="GO:0140662">
    <property type="term" value="F:ATP-dependent protein folding chaperone"/>
    <property type="evidence" value="ECO:0007669"/>
    <property type="project" value="InterPro"/>
</dbReference>
<dbReference type="GO" id="GO:0051082">
    <property type="term" value="F:unfolded protein binding"/>
    <property type="evidence" value="ECO:0007669"/>
    <property type="project" value="InterPro"/>
</dbReference>
<dbReference type="GO" id="GO:0016226">
    <property type="term" value="P:iron-sulfur cluster assembly"/>
    <property type="evidence" value="ECO:0007669"/>
    <property type="project" value="InterPro"/>
</dbReference>
<dbReference type="CDD" id="cd10236">
    <property type="entry name" value="ASKHA_NBD_HSP70_HscA"/>
    <property type="match status" value="1"/>
</dbReference>
<dbReference type="FunFam" id="3.30.420.40:FF:000046">
    <property type="entry name" value="Chaperone protein HscA"/>
    <property type="match status" value="1"/>
</dbReference>
<dbReference type="FunFam" id="2.60.34.10:FF:000005">
    <property type="entry name" value="Chaperone protein HscA homolog"/>
    <property type="match status" value="1"/>
</dbReference>
<dbReference type="Gene3D" id="1.20.1270.10">
    <property type="match status" value="1"/>
</dbReference>
<dbReference type="Gene3D" id="3.30.420.40">
    <property type="match status" value="2"/>
</dbReference>
<dbReference type="Gene3D" id="3.90.640.10">
    <property type="entry name" value="Actin, Chain A, domain 4"/>
    <property type="match status" value="1"/>
</dbReference>
<dbReference type="Gene3D" id="2.60.34.10">
    <property type="entry name" value="Substrate Binding Domain Of DNAk, Chain A, domain 1"/>
    <property type="match status" value="1"/>
</dbReference>
<dbReference type="HAMAP" id="MF_00679">
    <property type="entry name" value="HscA"/>
    <property type="match status" value="1"/>
</dbReference>
<dbReference type="InterPro" id="IPR043129">
    <property type="entry name" value="ATPase_NBD"/>
</dbReference>
<dbReference type="InterPro" id="IPR018181">
    <property type="entry name" value="Heat_shock_70_CS"/>
</dbReference>
<dbReference type="InterPro" id="IPR042039">
    <property type="entry name" value="HscA_NBD"/>
</dbReference>
<dbReference type="InterPro" id="IPR029048">
    <property type="entry name" value="HSP70_C_sf"/>
</dbReference>
<dbReference type="InterPro" id="IPR029047">
    <property type="entry name" value="HSP70_peptide-bd_sf"/>
</dbReference>
<dbReference type="InterPro" id="IPR013126">
    <property type="entry name" value="Hsp_70_fam"/>
</dbReference>
<dbReference type="InterPro" id="IPR010236">
    <property type="entry name" value="ISC_FeS_clus_asmbl_HscA"/>
</dbReference>
<dbReference type="NCBIfam" id="TIGR01991">
    <property type="entry name" value="HscA"/>
    <property type="match status" value="1"/>
</dbReference>
<dbReference type="NCBIfam" id="NF003520">
    <property type="entry name" value="PRK05183.1"/>
    <property type="match status" value="1"/>
</dbReference>
<dbReference type="PANTHER" id="PTHR19375">
    <property type="entry name" value="HEAT SHOCK PROTEIN 70KDA"/>
    <property type="match status" value="1"/>
</dbReference>
<dbReference type="Pfam" id="PF00012">
    <property type="entry name" value="HSP70"/>
    <property type="match status" value="1"/>
</dbReference>
<dbReference type="PRINTS" id="PR00301">
    <property type="entry name" value="HEATSHOCK70"/>
</dbReference>
<dbReference type="SUPFAM" id="SSF53067">
    <property type="entry name" value="Actin-like ATPase domain"/>
    <property type="match status" value="2"/>
</dbReference>
<dbReference type="SUPFAM" id="SSF100934">
    <property type="entry name" value="Heat shock protein 70kD (HSP70), C-terminal subdomain"/>
    <property type="match status" value="1"/>
</dbReference>
<dbReference type="SUPFAM" id="SSF100920">
    <property type="entry name" value="Heat shock protein 70kD (HSP70), peptide-binding domain"/>
    <property type="match status" value="1"/>
</dbReference>
<dbReference type="PROSITE" id="PS00297">
    <property type="entry name" value="HSP70_1"/>
    <property type="match status" value="1"/>
</dbReference>
<dbReference type="PROSITE" id="PS00329">
    <property type="entry name" value="HSP70_2"/>
    <property type="match status" value="1"/>
</dbReference>
<reference key="1">
    <citation type="journal article" date="2008" name="PLoS ONE">
        <title>A recalibrated molecular clock and independent origins for the cholera pandemic clones.</title>
        <authorList>
            <person name="Feng L."/>
            <person name="Reeves P.R."/>
            <person name="Lan R."/>
            <person name="Ren Y."/>
            <person name="Gao C."/>
            <person name="Zhou Z."/>
            <person name="Ren Y."/>
            <person name="Cheng J."/>
            <person name="Wang W."/>
            <person name="Wang J."/>
            <person name="Qian W."/>
            <person name="Li D."/>
            <person name="Wang L."/>
        </authorList>
    </citation>
    <scope>NUCLEOTIDE SEQUENCE [LARGE SCALE GENOMIC DNA]</scope>
    <source>
        <strain>M66-2</strain>
    </source>
</reference>
<organism>
    <name type="scientific">Vibrio cholerae serotype O1 (strain M66-2)</name>
    <dbReference type="NCBI Taxonomy" id="579112"/>
    <lineage>
        <taxon>Bacteria</taxon>
        <taxon>Pseudomonadati</taxon>
        <taxon>Pseudomonadota</taxon>
        <taxon>Gammaproteobacteria</taxon>
        <taxon>Vibrionales</taxon>
        <taxon>Vibrionaceae</taxon>
        <taxon>Vibrio</taxon>
    </lineage>
</organism>
<keyword id="KW-0067">ATP-binding</keyword>
<keyword id="KW-0143">Chaperone</keyword>
<keyword id="KW-0547">Nucleotide-binding</keyword>
<proteinExistence type="inferred from homology"/>
<protein>
    <recommendedName>
        <fullName evidence="1">Chaperone protein HscA homolog</fullName>
    </recommendedName>
</protein>
<evidence type="ECO:0000255" key="1">
    <source>
        <dbReference type="HAMAP-Rule" id="MF_00679"/>
    </source>
</evidence>
<comment type="function">
    <text evidence="1">Chaperone involved in the maturation of iron-sulfur cluster-containing proteins. Has a low intrinsic ATPase activity which is markedly stimulated by HscB.</text>
</comment>
<comment type="similarity">
    <text evidence="1">Belongs to the heat shock protein 70 family.</text>
</comment>
<feature type="chain" id="PRO_1000190673" description="Chaperone protein HscA homolog">
    <location>
        <begin position="1"/>
        <end position="616"/>
    </location>
</feature>
<sequence>MALLQIAEPGQSSAPHQHKLAAGIDLGTTNSLVASVRSGTASTLVDSQGRSILPSVVNYGADATRVGYPAREQAETDPHNTVISVKRLLGRSLQDINQRYPHLPYRFKASEKGLPIVQTAQGDKNPIQISADILKALAERATATLGGELAGVVITVPAYFDDAQRVATKDAAALAGLHVLRLLNEPTAAAIAYGLDSGQEGVIAVYDLGGGTFDISILRLSRGVFEVLATGGDSALGGDDFDHLIADHLQAQIGLTSLTAEQQRALINAATQAKIDLTEHMTAELNVLGWQGTFTREELENLIAPLLKKTLLSCRRALKDAGVEADEVLEVVMVGGSTRTPFVREQVGEFFGRTPLTSINPDEVVAIGAAIQADILAGNKPDAEMLLLDVIPLSLGIETMGGLVEKIIPRNTTIPVARAQEFTTFKDGQTAMSVHVVQGEREMVDDCRSLARFSLKGIPPMAAGAAHIRVTYQVDADGLLSVTALEKSTGVQAEIQVKPSYGLSDDEVTQMLKDSMAYAKEDMLARALAEQRVEADRVIEGLVSALQADGDELLSEQERQTLLQAIERLIELRNGDNADAIEQGIKDTDKASQDFASRRMDKSIRSALAGHSVDEI</sequence>
<accession>C3LT05</accession>
<gene>
    <name evidence="1" type="primary">hscA</name>
    <name type="ordered locus">VCM66_0710</name>
</gene>
<name>HSCA_VIBCM</name>